<name>CPIN1_TETNG</name>
<reference key="1">
    <citation type="journal article" date="2004" name="Nature">
        <title>Genome duplication in the teleost fish Tetraodon nigroviridis reveals the early vertebrate proto-karyotype.</title>
        <authorList>
            <person name="Jaillon O."/>
            <person name="Aury J.-M."/>
            <person name="Brunet F."/>
            <person name="Petit J.-L."/>
            <person name="Stange-Thomann N."/>
            <person name="Mauceli E."/>
            <person name="Bouneau L."/>
            <person name="Fischer C."/>
            <person name="Ozouf-Costaz C."/>
            <person name="Bernot A."/>
            <person name="Nicaud S."/>
            <person name="Jaffe D."/>
            <person name="Fisher S."/>
            <person name="Lutfalla G."/>
            <person name="Dossat C."/>
            <person name="Segurens B."/>
            <person name="Dasilva C."/>
            <person name="Salanoubat M."/>
            <person name="Levy M."/>
            <person name="Boudet N."/>
            <person name="Castellano S."/>
            <person name="Anthouard V."/>
            <person name="Jubin C."/>
            <person name="Castelli V."/>
            <person name="Katinka M."/>
            <person name="Vacherie B."/>
            <person name="Biemont C."/>
            <person name="Skalli Z."/>
            <person name="Cattolico L."/>
            <person name="Poulain J."/>
            <person name="De Berardinis V."/>
            <person name="Cruaud C."/>
            <person name="Duprat S."/>
            <person name="Brottier P."/>
            <person name="Coutanceau J.-P."/>
            <person name="Gouzy J."/>
            <person name="Parra G."/>
            <person name="Lardier G."/>
            <person name="Chapple C."/>
            <person name="McKernan K.J."/>
            <person name="McEwan P."/>
            <person name="Bosak S."/>
            <person name="Kellis M."/>
            <person name="Volff J.-N."/>
            <person name="Guigo R."/>
            <person name="Zody M.C."/>
            <person name="Mesirov J."/>
            <person name="Lindblad-Toh K."/>
            <person name="Birren B."/>
            <person name="Nusbaum C."/>
            <person name="Kahn D."/>
            <person name="Robinson-Rechavi M."/>
            <person name="Laudet V."/>
            <person name="Schachter V."/>
            <person name="Quetier F."/>
            <person name="Saurin W."/>
            <person name="Scarpelli C."/>
            <person name="Wincker P."/>
            <person name="Lander E.S."/>
            <person name="Weissenbach J."/>
            <person name="Roest Crollius H."/>
        </authorList>
    </citation>
    <scope>NUCLEOTIDE SEQUENCE [LARGE SCALE GENOMIC DNA]</scope>
</reference>
<evidence type="ECO:0000255" key="1">
    <source>
        <dbReference type="HAMAP-Rule" id="MF_03115"/>
    </source>
</evidence>
<keyword id="KW-0001">2Fe-2S</keyword>
<keyword id="KW-0004">4Fe-4S</keyword>
<keyword id="KW-0053">Apoptosis</keyword>
<keyword id="KW-0963">Cytoplasm</keyword>
<keyword id="KW-0408">Iron</keyword>
<keyword id="KW-0411">Iron-sulfur</keyword>
<keyword id="KW-0479">Metal-binding</keyword>
<keyword id="KW-0496">Mitochondrion</keyword>
<keyword id="KW-0539">Nucleus</keyword>
<keyword id="KW-1185">Reference proteome</keyword>
<proteinExistence type="inferred from homology"/>
<accession>Q4SK88</accession>
<comment type="function">
    <text evidence="1">Component of the cytosolic iron-sulfur (Fe-S) protein assembly (CIA) machinery required for the maturation of extramitochondrial Fe-S proteins. Part of an electron transfer chain functioning in an early step of cytosolic Fe-S biogenesis, facilitating the de novo assembly of a [4Fe-4S] cluster on the scaffold complex NUBP1-NUBP2. Electrons are transferred to CIAPIN1 from NADPH via the FAD- and FMN-containing protein NDOR1. NDOR1-CIAPIN1 are also required for the assembly of the diferric tyrosyl radical cofactor of ribonucleotide reductase (RNR), probably by providing electrons for reduction during radical cofactor maturation in the catalytic small subunit. Has anti-apoptotic effects in the cell. Involved in negative control of cell death upon cytokine withdrawal. Promotes development of hematopoietic cells.</text>
</comment>
<comment type="cofactor">
    <cofactor evidence="1">
        <name>[2Fe-2S] cluster</name>
        <dbReference type="ChEBI" id="CHEBI:190135"/>
    </cofactor>
</comment>
<comment type="cofactor">
    <cofactor evidence="1">
        <name>[4Fe-4S] cluster</name>
        <dbReference type="ChEBI" id="CHEBI:49883"/>
    </cofactor>
</comment>
<comment type="subunit">
    <text evidence="1">Monomer. Interacts with ndor1. Interacts with chchd4.</text>
</comment>
<comment type="subcellular location">
    <subcellularLocation>
        <location evidence="1">Cytoplasm</location>
    </subcellularLocation>
    <subcellularLocation>
        <location evidence="1">Nucleus</location>
    </subcellularLocation>
    <subcellularLocation>
        <location evidence="1">Mitochondrion intermembrane space</location>
    </subcellularLocation>
</comment>
<comment type="domain">
    <text evidence="1">The twin Cx2C motifs are involved in the recognition by the mitochondrial CHCHD4/MIA40-GFER/ERV1 disulfide relay system. The formation of 2 disulfide bonds in the Cx2C motifs through dithiol/disulfide exchange reactions effectively traps the protein in the mitochondrial intermembrane space.</text>
</comment>
<comment type="domain">
    <text evidence="1">The C-terminal domain binds 2 Fe-S clusters but is otherwise mostly in an intrinsically disordered conformation.</text>
</comment>
<comment type="domain">
    <text evidence="1">The N-terminal domain has structural similarity with S-adenosyl-L-methionine-dependent methyltransferases, but does not bind S-adenosyl-L-methionine. It is required for correct assembly of the 2 Fe-S clusters.</text>
</comment>
<comment type="similarity">
    <text evidence="1">Belongs to the anamorsin family.</text>
</comment>
<sequence length="313" mass="33334">MATLGIKAGENVLMVWAQPSKPATLKDYAEELSSIVGTDGKVSVENVDRLLLSSHSASTFDCAVSCVLADSSAVHSLDTLAELARVLKPGGKLILEEVVTGAEAQRERTSEKLVSTLKLSGFTSVTEISKAELSPDALSAIRTATGYQGNALFRIRMSASKPDFEVGSSSQIKLSFGNKAPRPADKPAPDPNTVKMWMLSANDMNDDDLDLVDSDSLLDEEDLKKPDPSSLKASTCGEAAGKKKKACKNCTCGLAEELEQESKEKEKTNLPKSACGSCYLGDAFRCASCPYLGMPAFKPGEKILLDNKTLTDA</sequence>
<gene>
    <name evidence="1" type="primary">ciapin1</name>
    <name type="ORF">GSTENG00016831001</name>
</gene>
<protein>
    <recommendedName>
        <fullName evidence="1">Anamorsin</fullName>
    </recommendedName>
    <alternativeName>
        <fullName evidence="1">Cytokine-induced apoptosis inhibitor 1</fullName>
    </alternativeName>
    <alternativeName>
        <fullName evidence="1">Fe-S cluster assembly protein DRE2 homolog</fullName>
    </alternativeName>
</protein>
<dbReference type="EMBL" id="CAAE01014566">
    <property type="protein sequence ID" value="CAF98944.1"/>
    <property type="molecule type" value="Genomic_DNA"/>
</dbReference>
<dbReference type="SMR" id="Q4SK88"/>
<dbReference type="FunCoup" id="Q4SK88">
    <property type="interactions" value="1422"/>
</dbReference>
<dbReference type="STRING" id="99883.ENSTNIP00000011704"/>
<dbReference type="KEGG" id="tng:GSTEN00016831G001"/>
<dbReference type="HOGENOM" id="CLU_064393_1_0_1"/>
<dbReference type="InParanoid" id="Q4SK88"/>
<dbReference type="OrthoDB" id="311633at2759"/>
<dbReference type="Proteomes" id="UP000007303">
    <property type="component" value="Unassembled WGS sequence"/>
</dbReference>
<dbReference type="GO" id="GO:0005758">
    <property type="term" value="C:mitochondrial intermembrane space"/>
    <property type="evidence" value="ECO:0007669"/>
    <property type="project" value="UniProtKB-SubCell"/>
</dbReference>
<dbReference type="GO" id="GO:0005634">
    <property type="term" value="C:nucleus"/>
    <property type="evidence" value="ECO:0007669"/>
    <property type="project" value="UniProtKB-SubCell"/>
</dbReference>
<dbReference type="GO" id="GO:0051537">
    <property type="term" value="F:2 iron, 2 sulfur cluster binding"/>
    <property type="evidence" value="ECO:0000250"/>
    <property type="project" value="UniProtKB"/>
</dbReference>
<dbReference type="GO" id="GO:0051539">
    <property type="term" value="F:4 iron, 4 sulfur cluster binding"/>
    <property type="evidence" value="ECO:0007669"/>
    <property type="project" value="UniProtKB-KW"/>
</dbReference>
<dbReference type="GO" id="GO:0009055">
    <property type="term" value="F:electron transfer activity"/>
    <property type="evidence" value="ECO:0007669"/>
    <property type="project" value="UniProtKB-UniRule"/>
</dbReference>
<dbReference type="GO" id="GO:0046872">
    <property type="term" value="F:metal ion binding"/>
    <property type="evidence" value="ECO:0007669"/>
    <property type="project" value="UniProtKB-KW"/>
</dbReference>
<dbReference type="GO" id="GO:0006915">
    <property type="term" value="P:apoptotic process"/>
    <property type="evidence" value="ECO:0007669"/>
    <property type="project" value="UniProtKB-KW"/>
</dbReference>
<dbReference type="GO" id="GO:0030097">
    <property type="term" value="P:hemopoiesis"/>
    <property type="evidence" value="ECO:0007669"/>
    <property type="project" value="UniProtKB-UniRule"/>
</dbReference>
<dbReference type="GO" id="GO:0016226">
    <property type="term" value="P:iron-sulfur cluster assembly"/>
    <property type="evidence" value="ECO:0007669"/>
    <property type="project" value="UniProtKB-UniRule"/>
</dbReference>
<dbReference type="GO" id="GO:0043066">
    <property type="term" value="P:negative regulation of apoptotic process"/>
    <property type="evidence" value="ECO:0007669"/>
    <property type="project" value="UniProtKB-UniRule"/>
</dbReference>
<dbReference type="FunFam" id="3.40.50.150:FF:000085">
    <property type="entry name" value="Anamorsin homolog"/>
    <property type="match status" value="1"/>
</dbReference>
<dbReference type="Gene3D" id="3.40.50.150">
    <property type="entry name" value="Vaccinia Virus protein VP39"/>
    <property type="match status" value="1"/>
</dbReference>
<dbReference type="HAMAP" id="MF_03115">
    <property type="entry name" value="Anamorsin"/>
    <property type="match status" value="1"/>
</dbReference>
<dbReference type="InterPro" id="IPR007785">
    <property type="entry name" value="Anamorsin"/>
</dbReference>
<dbReference type="InterPro" id="IPR049011">
    <property type="entry name" value="Anamorsin_N_metazoan"/>
</dbReference>
<dbReference type="InterPro" id="IPR046408">
    <property type="entry name" value="CIAPIN1"/>
</dbReference>
<dbReference type="InterPro" id="IPR029063">
    <property type="entry name" value="SAM-dependent_MTases_sf"/>
</dbReference>
<dbReference type="PANTHER" id="PTHR13273">
    <property type="entry name" value="ANAMORSIN"/>
    <property type="match status" value="1"/>
</dbReference>
<dbReference type="PANTHER" id="PTHR13273:SF14">
    <property type="entry name" value="ANAMORSIN"/>
    <property type="match status" value="1"/>
</dbReference>
<dbReference type="Pfam" id="PF20922">
    <property type="entry name" value="Anamorsin_N"/>
    <property type="match status" value="1"/>
</dbReference>
<dbReference type="Pfam" id="PF05093">
    <property type="entry name" value="CIAPIN1"/>
    <property type="match status" value="2"/>
</dbReference>
<dbReference type="SUPFAM" id="SSF53335">
    <property type="entry name" value="S-adenosyl-L-methionine-dependent methyltransferases"/>
    <property type="match status" value="1"/>
</dbReference>
<organism>
    <name type="scientific">Tetraodon nigroviridis</name>
    <name type="common">Spotted green pufferfish</name>
    <name type="synonym">Chelonodon nigroviridis</name>
    <dbReference type="NCBI Taxonomy" id="99883"/>
    <lineage>
        <taxon>Eukaryota</taxon>
        <taxon>Metazoa</taxon>
        <taxon>Chordata</taxon>
        <taxon>Craniata</taxon>
        <taxon>Vertebrata</taxon>
        <taxon>Euteleostomi</taxon>
        <taxon>Actinopterygii</taxon>
        <taxon>Neopterygii</taxon>
        <taxon>Teleostei</taxon>
        <taxon>Neoteleostei</taxon>
        <taxon>Acanthomorphata</taxon>
        <taxon>Eupercaria</taxon>
        <taxon>Tetraodontiformes</taxon>
        <taxon>Tetradontoidea</taxon>
        <taxon>Tetraodontidae</taxon>
        <taxon>Tetraodon</taxon>
    </lineage>
</organism>
<feature type="chain" id="PRO_0000392306" description="Anamorsin">
    <location>
        <begin position="1"/>
        <end position="313"/>
    </location>
</feature>
<feature type="region of interest" description="N-terminal SAM-like domain" evidence="1">
    <location>
        <begin position="6"/>
        <end position="172"/>
    </location>
</feature>
<feature type="region of interest" description="Linker" evidence="1">
    <location>
        <begin position="173"/>
        <end position="223"/>
    </location>
</feature>
<feature type="region of interest" description="Fe-S binding site A" evidence="1">
    <location>
        <begin position="236"/>
        <end position="252"/>
    </location>
</feature>
<feature type="region of interest" description="Fe-S binding site B" evidence="1">
    <location>
        <begin position="275"/>
        <end position="289"/>
    </location>
</feature>
<feature type="short sequence motif" description="Cx2C motif 1" evidence="1">
    <location>
        <begin position="275"/>
        <end position="278"/>
    </location>
</feature>
<feature type="short sequence motif" description="Cx2C motif 2" evidence="1">
    <location>
        <begin position="286"/>
        <end position="289"/>
    </location>
</feature>
<feature type="binding site" evidence="1">
    <location>
        <position position="236"/>
    </location>
    <ligand>
        <name>[2Fe-2S] cluster</name>
        <dbReference type="ChEBI" id="CHEBI:190135"/>
    </ligand>
</feature>
<feature type="binding site" evidence="1">
    <location>
        <position position="247"/>
    </location>
    <ligand>
        <name>[2Fe-2S] cluster</name>
        <dbReference type="ChEBI" id="CHEBI:190135"/>
    </ligand>
</feature>
<feature type="binding site" evidence="1">
    <location>
        <position position="250"/>
    </location>
    <ligand>
        <name>[2Fe-2S] cluster</name>
        <dbReference type="ChEBI" id="CHEBI:190135"/>
    </ligand>
</feature>
<feature type="binding site" evidence="1">
    <location>
        <position position="252"/>
    </location>
    <ligand>
        <name>[2Fe-2S] cluster</name>
        <dbReference type="ChEBI" id="CHEBI:190135"/>
    </ligand>
</feature>
<feature type="binding site" evidence="1">
    <location>
        <position position="275"/>
    </location>
    <ligand>
        <name>[4Fe-4S] cluster</name>
        <dbReference type="ChEBI" id="CHEBI:49883"/>
    </ligand>
</feature>
<feature type="binding site" evidence="1">
    <location>
        <position position="278"/>
    </location>
    <ligand>
        <name>[4Fe-4S] cluster</name>
        <dbReference type="ChEBI" id="CHEBI:49883"/>
    </ligand>
</feature>
<feature type="binding site" evidence="1">
    <location>
        <position position="286"/>
    </location>
    <ligand>
        <name>[4Fe-4S] cluster</name>
        <dbReference type="ChEBI" id="CHEBI:49883"/>
    </ligand>
</feature>
<feature type="binding site" evidence="1">
    <location>
        <position position="289"/>
    </location>
    <ligand>
        <name>[4Fe-4S] cluster</name>
        <dbReference type="ChEBI" id="CHEBI:49883"/>
    </ligand>
</feature>